<dbReference type="EMBL" id="CR956379">
    <property type="protein sequence ID" value="CAN13172.1"/>
    <property type="molecule type" value="Genomic_DNA"/>
</dbReference>
<dbReference type="EMBL" id="Z81165">
    <property type="protein sequence ID" value="CAB03550.1"/>
    <property type="molecule type" value="mRNA"/>
</dbReference>
<dbReference type="RefSeq" id="NP_001103899.1">
    <property type="nucleotide sequence ID" value="NM_001110429.1"/>
</dbReference>
<dbReference type="RefSeq" id="XP_005666041.1">
    <property type="nucleotide sequence ID" value="XM_005665984.3"/>
</dbReference>
<dbReference type="RefSeq" id="XP_005666042.1">
    <property type="nucleotide sequence ID" value="XM_005665985.3"/>
</dbReference>
<dbReference type="RefSeq" id="XP_013833375.1">
    <property type="nucleotide sequence ID" value="XM_013977921.1"/>
</dbReference>
<dbReference type="RefSeq" id="XP_013833376.1">
    <property type="nucleotide sequence ID" value="XM_013977922.1"/>
</dbReference>
<dbReference type="RefSeq" id="XP_013833377.1">
    <property type="nucleotide sequence ID" value="XM_013977923.2"/>
</dbReference>
<dbReference type="FunCoup" id="Q95313">
    <property type="interactions" value="1214"/>
</dbReference>
<dbReference type="STRING" id="9823.ENSSSCP00000001794"/>
<dbReference type="GlyGen" id="Q95313">
    <property type="glycosylation" value="1 site"/>
</dbReference>
<dbReference type="PaxDb" id="9823-ENSSSCP00000001794"/>
<dbReference type="PeptideAtlas" id="Q95313"/>
<dbReference type="Ensembl" id="ENSSSCT00000073227.1">
    <property type="protein sequence ID" value="ENSSSCP00000060822.1"/>
    <property type="gene ID" value="ENSSSCG00000001655.4"/>
</dbReference>
<dbReference type="Ensembl" id="ENSSSCT00015034524.1">
    <property type="protein sequence ID" value="ENSSSCP00015013664.1"/>
    <property type="gene ID" value="ENSSSCG00015025979.1"/>
</dbReference>
<dbReference type="Ensembl" id="ENSSSCT00025057337.1">
    <property type="protein sequence ID" value="ENSSSCP00025024246.1"/>
    <property type="gene ID" value="ENSSSCG00025042272.1"/>
</dbReference>
<dbReference type="Ensembl" id="ENSSSCT00030084952.1">
    <property type="protein sequence ID" value="ENSSSCP00030039128.1"/>
    <property type="gene ID" value="ENSSSCG00030060727.1"/>
</dbReference>
<dbReference type="Ensembl" id="ENSSSCT00035052486.1">
    <property type="protein sequence ID" value="ENSSSCP00035021107.1"/>
    <property type="gene ID" value="ENSSSCG00035039487.1"/>
</dbReference>
<dbReference type="Ensembl" id="ENSSSCT00035052489.1">
    <property type="protein sequence ID" value="ENSSSCP00035021110.1"/>
    <property type="gene ID" value="ENSSSCG00035039487.1"/>
</dbReference>
<dbReference type="Ensembl" id="ENSSSCT00040070483.1">
    <property type="protein sequence ID" value="ENSSSCP00040030020.1"/>
    <property type="gene ID" value="ENSSSCG00040051755.1"/>
</dbReference>
<dbReference type="Ensembl" id="ENSSSCT00040070530.1">
    <property type="protein sequence ID" value="ENSSSCP00040030040.1"/>
    <property type="gene ID" value="ENSSSCG00040051755.1"/>
</dbReference>
<dbReference type="Ensembl" id="ENSSSCT00045057231.1">
    <property type="protein sequence ID" value="ENSSSCP00045040003.1"/>
    <property type="gene ID" value="ENSSSCG00045033431.1"/>
</dbReference>
<dbReference type="Ensembl" id="ENSSSCT00050005642.1">
    <property type="protein sequence ID" value="ENSSSCP00050002385.1"/>
    <property type="gene ID" value="ENSSSCG00050004128.1"/>
</dbReference>
<dbReference type="Ensembl" id="ENSSSCT00055035982.1">
    <property type="protein sequence ID" value="ENSSSCP00055028573.1"/>
    <property type="gene ID" value="ENSSSCG00055018378.1"/>
</dbReference>
<dbReference type="Ensembl" id="ENSSSCT00060081844.1">
    <property type="protein sequence ID" value="ENSSSCP00060035453.1"/>
    <property type="gene ID" value="ENSSSCG00060059952.1"/>
</dbReference>
<dbReference type="Ensembl" id="ENSSSCT00065109667.1">
    <property type="protein sequence ID" value="ENSSSCP00065049333.1"/>
    <property type="gene ID" value="ENSSSCG00065078936.1"/>
</dbReference>
<dbReference type="Ensembl" id="ENSSSCT00065109674.1">
    <property type="protein sequence ID" value="ENSSSCP00065049335.1"/>
    <property type="gene ID" value="ENSSSCG00065078936.1"/>
</dbReference>
<dbReference type="Ensembl" id="ENSSSCT00070000253.1">
    <property type="protein sequence ID" value="ENSSSCP00070000210.1"/>
    <property type="gene ID" value="ENSSSCG00070000151.1"/>
</dbReference>
<dbReference type="Ensembl" id="ENSSSCT00105005478">
    <property type="protein sequence ID" value="ENSSSCP00105004067"/>
    <property type="gene ID" value="ENSSSCG00105002796"/>
</dbReference>
<dbReference type="Ensembl" id="ENSSSCT00115014002">
    <property type="protein sequence ID" value="ENSSSCP00115013221"/>
    <property type="gene ID" value="ENSSSCG00115008018"/>
</dbReference>
<dbReference type="GeneID" id="100126291"/>
<dbReference type="KEGG" id="ssc:100126291"/>
<dbReference type="CTD" id="4201"/>
<dbReference type="VGNC" id="VGNC:103981">
    <property type="gene designation" value="MEA1"/>
</dbReference>
<dbReference type="eggNOG" id="ENOG502S34Y">
    <property type="taxonomic scope" value="Eukaryota"/>
</dbReference>
<dbReference type="GeneTree" id="ENSGT00390000016927"/>
<dbReference type="HOGENOM" id="CLU_096511_0_0_1"/>
<dbReference type="InParanoid" id="Q95313"/>
<dbReference type="OMA" id="SIPMDPD"/>
<dbReference type="OrthoDB" id="5593200at2759"/>
<dbReference type="TreeFam" id="TF332365"/>
<dbReference type="Proteomes" id="UP000008227">
    <property type="component" value="Chromosome 7"/>
</dbReference>
<dbReference type="Proteomes" id="UP000314985">
    <property type="component" value="Chromosome 7"/>
</dbReference>
<dbReference type="Proteomes" id="UP000694570">
    <property type="component" value="Unplaced"/>
</dbReference>
<dbReference type="Proteomes" id="UP000694571">
    <property type="component" value="Unplaced"/>
</dbReference>
<dbReference type="Proteomes" id="UP000694720">
    <property type="component" value="Unplaced"/>
</dbReference>
<dbReference type="Proteomes" id="UP000694722">
    <property type="component" value="Unplaced"/>
</dbReference>
<dbReference type="Proteomes" id="UP000694723">
    <property type="component" value="Unplaced"/>
</dbReference>
<dbReference type="Proteomes" id="UP000694724">
    <property type="component" value="Unplaced"/>
</dbReference>
<dbReference type="Proteomes" id="UP000694725">
    <property type="component" value="Unplaced"/>
</dbReference>
<dbReference type="Proteomes" id="UP000694726">
    <property type="component" value="Unplaced"/>
</dbReference>
<dbReference type="Proteomes" id="UP000694727">
    <property type="component" value="Unplaced"/>
</dbReference>
<dbReference type="Proteomes" id="UP000694728">
    <property type="component" value="Unplaced"/>
</dbReference>
<dbReference type="Bgee" id="ENSSSCG00000001655">
    <property type="expression patterns" value="Expressed in testis and 46 other cell types or tissues"/>
</dbReference>
<dbReference type="ExpressionAtlas" id="Q95313">
    <property type="expression patterns" value="baseline"/>
</dbReference>
<dbReference type="GO" id="GO:0030154">
    <property type="term" value="P:cell differentiation"/>
    <property type="evidence" value="ECO:0007669"/>
    <property type="project" value="UniProtKB-KW"/>
</dbReference>
<dbReference type="GO" id="GO:0007283">
    <property type="term" value="P:spermatogenesis"/>
    <property type="evidence" value="ECO:0007669"/>
    <property type="project" value="UniProtKB-KW"/>
</dbReference>
<dbReference type="InterPro" id="IPR009685">
    <property type="entry name" value="MEA1"/>
</dbReference>
<dbReference type="PANTHER" id="PTHR17005">
    <property type="entry name" value="MALE-ENHANCED ANTIGEN-1"/>
    <property type="match status" value="1"/>
</dbReference>
<dbReference type="Pfam" id="PF06910">
    <property type="entry name" value="MEA1"/>
    <property type="match status" value="1"/>
</dbReference>
<reference key="1">
    <citation type="submission" date="2007-05" db="EMBL/GenBank/DDBJ databases">
        <authorList>
            <consortium name="Porcine genome sequencing project"/>
        </authorList>
    </citation>
    <scope>NUCLEOTIDE SEQUENCE [LARGE SCALE GENOMIC DNA]</scope>
</reference>
<reference key="2">
    <citation type="journal article" date="1996" name="Mamm. Genome">
        <title>Evaluation and characterization of a porcine small intestine cDNA library: analysis of 839 clones.</title>
        <authorList>
            <person name="Winteroe A.K."/>
            <person name="Fredholm M."/>
            <person name="Davies W."/>
        </authorList>
    </citation>
    <scope>NUCLEOTIDE SEQUENCE [LARGE SCALE MRNA] OF 1-113</scope>
    <source>
        <tissue>Small intestine</tissue>
    </source>
</reference>
<protein>
    <recommendedName>
        <fullName>Male-enhanced antigen 1</fullName>
        <shortName>MEA-1</shortName>
    </recommendedName>
</protein>
<sequence>MAAVVLGGDIMGPERIFPNQTEELGPHQGPTEGTGDWSSEEPEEEQEETGTGPAGYSYQPLNQDPEQEEVELAPVGDGEDVVADIQDRIQALGLHLPDPPLESEDEDEEGATALSNHSSIPMDPEHVELVKRTMAGVSLPAPGVPAWAREISDAQWEDVVQKALQARQATPAWK</sequence>
<evidence type="ECO:0000250" key="1">
    <source>
        <dbReference type="UniProtKB" id="Q16626"/>
    </source>
</evidence>
<evidence type="ECO:0000256" key="2">
    <source>
        <dbReference type="SAM" id="MobiDB-lite"/>
    </source>
</evidence>
<evidence type="ECO:0000305" key="3"/>
<feature type="chain" id="PRO_0000096343" description="Male-enhanced antigen 1">
    <location>
        <begin position="1"/>
        <end position="174"/>
    </location>
</feature>
<feature type="region of interest" description="Disordered" evidence="2">
    <location>
        <begin position="1"/>
        <end position="77"/>
    </location>
</feature>
<feature type="region of interest" description="Disordered" evidence="2">
    <location>
        <begin position="94"/>
        <end position="123"/>
    </location>
</feature>
<feature type="compositionally biased region" description="Acidic residues" evidence="2">
    <location>
        <begin position="38"/>
        <end position="48"/>
    </location>
</feature>
<feature type="compositionally biased region" description="Acidic residues" evidence="2">
    <location>
        <begin position="65"/>
        <end position="77"/>
    </location>
</feature>
<feature type="compositionally biased region" description="Acidic residues" evidence="2">
    <location>
        <begin position="101"/>
        <end position="110"/>
    </location>
</feature>
<feature type="modified residue" description="Phosphoserine" evidence="1">
    <location>
        <position position="103"/>
    </location>
</feature>
<organism>
    <name type="scientific">Sus scrofa</name>
    <name type="common">Pig</name>
    <dbReference type="NCBI Taxonomy" id="9823"/>
    <lineage>
        <taxon>Eukaryota</taxon>
        <taxon>Metazoa</taxon>
        <taxon>Chordata</taxon>
        <taxon>Craniata</taxon>
        <taxon>Vertebrata</taxon>
        <taxon>Euteleostomi</taxon>
        <taxon>Mammalia</taxon>
        <taxon>Eutheria</taxon>
        <taxon>Laurasiatheria</taxon>
        <taxon>Artiodactyla</taxon>
        <taxon>Suina</taxon>
        <taxon>Suidae</taxon>
        <taxon>Sus</taxon>
    </lineage>
</organism>
<comment type="function">
    <text>May play an important role in spermatogenesis and/or testis development.</text>
</comment>
<comment type="caution">
    <text evidence="3">It is uncertain whether Met-1 or Met-11 is the initiator.</text>
</comment>
<accession>Q95313</accession>
<accession>A5GFR0</accession>
<keyword id="KW-0217">Developmental protein</keyword>
<keyword id="KW-0221">Differentiation</keyword>
<keyword id="KW-0597">Phosphoprotein</keyword>
<keyword id="KW-1185">Reference proteome</keyword>
<keyword id="KW-0744">Spermatogenesis</keyword>
<gene>
    <name type="primary">MEA1</name>
    <name type="synonym">MEA</name>
</gene>
<proteinExistence type="evidence at transcript level"/>
<name>MEA1_PIG</name>